<dbReference type="EMBL" id="CU329671">
    <property type="protein sequence ID" value="CAA21787.1"/>
    <property type="molecule type" value="Genomic_DNA"/>
</dbReference>
<dbReference type="PIR" id="T40796">
    <property type="entry name" value="T40796"/>
</dbReference>
<dbReference type="SMR" id="O94252"/>
<dbReference type="BioGRID" id="277796">
    <property type="interactions" value="23"/>
</dbReference>
<dbReference type="STRING" id="284812.O94252"/>
<dbReference type="iPTMnet" id="O94252"/>
<dbReference type="PaxDb" id="4896-SPBP8B7.02.1"/>
<dbReference type="EnsemblFungi" id="SPBP8B7.02.1">
    <property type="protein sequence ID" value="SPBP8B7.02.1:pep"/>
    <property type="gene ID" value="SPBP8B7.02"/>
</dbReference>
<dbReference type="KEGG" id="spo:2541283"/>
<dbReference type="PomBase" id="SPBP8B7.02"/>
<dbReference type="VEuPathDB" id="FungiDB:SPBP8B7.02"/>
<dbReference type="HOGENOM" id="CLU_1066200_0_0_1"/>
<dbReference type="InParanoid" id="O94252"/>
<dbReference type="OMA" id="TVEKMIM"/>
<dbReference type="PRO" id="PR:O94252"/>
<dbReference type="Proteomes" id="UP000002485">
    <property type="component" value="Chromosome II"/>
</dbReference>
<dbReference type="GO" id="GO:1990819">
    <property type="term" value="C:mating projection actin fusion focus"/>
    <property type="evidence" value="ECO:0000314"/>
    <property type="project" value="PomBase"/>
</dbReference>
<dbReference type="GO" id="GO:0110085">
    <property type="term" value="C:mitotic actomyosin contractile ring"/>
    <property type="evidence" value="ECO:0000314"/>
    <property type="project" value="PomBase"/>
</dbReference>
<dbReference type="GO" id="GO:0071520">
    <property type="term" value="P:actomyosin contractile ring assembly actin filament bundle convergence"/>
    <property type="evidence" value="ECO:0000315"/>
    <property type="project" value="PomBase"/>
</dbReference>
<dbReference type="GO" id="GO:0000747">
    <property type="term" value="P:conjugation with cellular fusion"/>
    <property type="evidence" value="ECO:0000315"/>
    <property type="project" value="PomBase"/>
</dbReference>
<dbReference type="GO" id="GO:1904600">
    <property type="term" value="P:mating projection actin fusion focus assembly"/>
    <property type="evidence" value="ECO:0000315"/>
    <property type="project" value="PomBase"/>
</dbReference>
<dbReference type="GO" id="GO:0000281">
    <property type="term" value="P:mitotic cytokinesis"/>
    <property type="evidence" value="ECO:0000315"/>
    <property type="project" value="PomBase"/>
</dbReference>
<accession>O94252</accession>
<name>YOR2_SCHPO</name>
<evidence type="ECO:0000255" key="1"/>
<evidence type="ECO:0000269" key="2">
    <source>
    </source>
</evidence>
<comment type="subcellular location">
    <subcellularLocation>
        <location evidence="2">Cytoplasm</location>
    </subcellularLocation>
    <text>Localizes to the barrier septum.</text>
</comment>
<keyword id="KW-0175">Coiled coil</keyword>
<keyword id="KW-0963">Cytoplasm</keyword>
<keyword id="KW-1185">Reference proteome</keyword>
<feature type="chain" id="PRO_0000304122" description="Uncharacterized protein P8B7.02">
    <location>
        <begin position="1"/>
        <end position="261"/>
    </location>
</feature>
<feature type="coiled-coil region" evidence="1">
    <location>
        <begin position="16"/>
        <end position="147"/>
    </location>
</feature>
<proteinExistence type="predicted"/>
<protein>
    <recommendedName>
        <fullName>Uncharacterized protein P8B7.02</fullName>
    </recommendedName>
</protein>
<sequence length="261" mass="30026">MNDEESHISVLPVMNKQTSLVLQNLKEETENQLKELEKKRSQLHKEEQINLQLVYAINDLRSKTKELKAENEKEDTFLNSFNASGDLTANKKIQLREQSRKLEESLLSYHKKVKEMEKQHRSASSKLELAKLSAQQLQTNVNVLRSQNNPEILQDMISETKDCRSLIAEQLLQSASLLNDFQNDSDRIAKNHSSLIDTSRAHRVSLTNATKNYTHIFDSLLTFTRHDSEDVSTSVEKLTSKKISELEKLFADYCSIEDAFD</sequence>
<organism>
    <name type="scientific">Schizosaccharomyces pombe (strain 972 / ATCC 24843)</name>
    <name type="common">Fission yeast</name>
    <dbReference type="NCBI Taxonomy" id="284812"/>
    <lineage>
        <taxon>Eukaryota</taxon>
        <taxon>Fungi</taxon>
        <taxon>Dikarya</taxon>
        <taxon>Ascomycota</taxon>
        <taxon>Taphrinomycotina</taxon>
        <taxon>Schizosaccharomycetes</taxon>
        <taxon>Schizosaccharomycetales</taxon>
        <taxon>Schizosaccharomycetaceae</taxon>
        <taxon>Schizosaccharomyces</taxon>
    </lineage>
</organism>
<reference key="1">
    <citation type="journal article" date="2002" name="Nature">
        <title>The genome sequence of Schizosaccharomyces pombe.</title>
        <authorList>
            <person name="Wood V."/>
            <person name="Gwilliam R."/>
            <person name="Rajandream M.A."/>
            <person name="Lyne M.H."/>
            <person name="Lyne R."/>
            <person name="Stewart A."/>
            <person name="Sgouros J.G."/>
            <person name="Peat N."/>
            <person name="Hayles J."/>
            <person name="Baker S.G."/>
            <person name="Basham D."/>
            <person name="Bowman S."/>
            <person name="Brooks K."/>
            <person name="Brown D."/>
            <person name="Brown S."/>
            <person name="Chillingworth T."/>
            <person name="Churcher C.M."/>
            <person name="Collins M."/>
            <person name="Connor R."/>
            <person name="Cronin A."/>
            <person name="Davis P."/>
            <person name="Feltwell T."/>
            <person name="Fraser A."/>
            <person name="Gentles S."/>
            <person name="Goble A."/>
            <person name="Hamlin N."/>
            <person name="Harris D.E."/>
            <person name="Hidalgo J."/>
            <person name="Hodgson G."/>
            <person name="Holroyd S."/>
            <person name="Hornsby T."/>
            <person name="Howarth S."/>
            <person name="Huckle E.J."/>
            <person name="Hunt S."/>
            <person name="Jagels K."/>
            <person name="James K.D."/>
            <person name="Jones L."/>
            <person name="Jones M."/>
            <person name="Leather S."/>
            <person name="McDonald S."/>
            <person name="McLean J."/>
            <person name="Mooney P."/>
            <person name="Moule S."/>
            <person name="Mungall K.L."/>
            <person name="Murphy L.D."/>
            <person name="Niblett D."/>
            <person name="Odell C."/>
            <person name="Oliver K."/>
            <person name="O'Neil S."/>
            <person name="Pearson D."/>
            <person name="Quail M.A."/>
            <person name="Rabbinowitsch E."/>
            <person name="Rutherford K.M."/>
            <person name="Rutter S."/>
            <person name="Saunders D."/>
            <person name="Seeger K."/>
            <person name="Sharp S."/>
            <person name="Skelton J."/>
            <person name="Simmonds M.N."/>
            <person name="Squares R."/>
            <person name="Squares S."/>
            <person name="Stevens K."/>
            <person name="Taylor K."/>
            <person name="Taylor R.G."/>
            <person name="Tivey A."/>
            <person name="Walsh S.V."/>
            <person name="Warren T."/>
            <person name="Whitehead S."/>
            <person name="Woodward J.R."/>
            <person name="Volckaert G."/>
            <person name="Aert R."/>
            <person name="Robben J."/>
            <person name="Grymonprez B."/>
            <person name="Weltjens I."/>
            <person name="Vanstreels E."/>
            <person name="Rieger M."/>
            <person name="Schaefer M."/>
            <person name="Mueller-Auer S."/>
            <person name="Gabel C."/>
            <person name="Fuchs M."/>
            <person name="Duesterhoeft A."/>
            <person name="Fritzc C."/>
            <person name="Holzer E."/>
            <person name="Moestl D."/>
            <person name="Hilbert H."/>
            <person name="Borzym K."/>
            <person name="Langer I."/>
            <person name="Beck A."/>
            <person name="Lehrach H."/>
            <person name="Reinhardt R."/>
            <person name="Pohl T.M."/>
            <person name="Eger P."/>
            <person name="Zimmermann W."/>
            <person name="Wedler H."/>
            <person name="Wambutt R."/>
            <person name="Purnelle B."/>
            <person name="Goffeau A."/>
            <person name="Cadieu E."/>
            <person name="Dreano S."/>
            <person name="Gloux S."/>
            <person name="Lelaure V."/>
            <person name="Mottier S."/>
            <person name="Galibert F."/>
            <person name="Aves S.J."/>
            <person name="Xiang Z."/>
            <person name="Hunt C."/>
            <person name="Moore K."/>
            <person name="Hurst S.M."/>
            <person name="Lucas M."/>
            <person name="Rochet M."/>
            <person name="Gaillardin C."/>
            <person name="Tallada V.A."/>
            <person name="Garzon A."/>
            <person name="Thode G."/>
            <person name="Daga R.R."/>
            <person name="Cruzado L."/>
            <person name="Jimenez J."/>
            <person name="Sanchez M."/>
            <person name="del Rey F."/>
            <person name="Benito J."/>
            <person name="Dominguez A."/>
            <person name="Revuelta J.L."/>
            <person name="Moreno S."/>
            <person name="Armstrong J."/>
            <person name="Forsburg S.L."/>
            <person name="Cerutti L."/>
            <person name="Lowe T."/>
            <person name="McCombie W.R."/>
            <person name="Paulsen I."/>
            <person name="Potashkin J."/>
            <person name="Shpakovski G.V."/>
            <person name="Ussery D."/>
            <person name="Barrell B.G."/>
            <person name="Nurse P."/>
        </authorList>
    </citation>
    <scope>NUCLEOTIDE SEQUENCE [LARGE SCALE GENOMIC DNA]</scope>
    <source>
        <strain>972 / ATCC 24843</strain>
    </source>
</reference>
<reference key="2">
    <citation type="journal article" date="2006" name="Nat. Biotechnol.">
        <title>ORFeome cloning and global analysis of protein localization in the fission yeast Schizosaccharomyces pombe.</title>
        <authorList>
            <person name="Matsuyama A."/>
            <person name="Arai R."/>
            <person name="Yashiroda Y."/>
            <person name="Shirai A."/>
            <person name="Kamata A."/>
            <person name="Sekido S."/>
            <person name="Kobayashi Y."/>
            <person name="Hashimoto A."/>
            <person name="Hamamoto M."/>
            <person name="Hiraoka Y."/>
            <person name="Horinouchi S."/>
            <person name="Yoshida M."/>
        </authorList>
    </citation>
    <scope>SUBCELLULAR LOCATION [LARGE SCALE ANALYSIS]</scope>
</reference>
<gene>
    <name type="ORF">SPBP8B7.02</name>
</gene>